<keyword id="KW-0677">Repeat</keyword>
<keyword id="KW-0687">Ribonucleoprotein</keyword>
<keyword id="KW-0689">Ribosomal protein</keyword>
<keyword id="KW-0694">RNA-binding</keyword>
<accession>Q6GGT5</accession>
<proteinExistence type="inferred from homology"/>
<gene>
    <name type="primary">rpsA</name>
    <name type="ordered locus">SAR1485</name>
</gene>
<feature type="chain" id="PRO_0000196050" description="Small ribosomal subunit protein bS1">
    <location>
        <begin position="1"/>
        <end position="391"/>
    </location>
</feature>
<feature type="domain" description="S1 motif 1" evidence="2">
    <location>
        <begin position="16"/>
        <end position="90"/>
    </location>
</feature>
<feature type="domain" description="S1 motif 2" evidence="2">
    <location>
        <begin position="108"/>
        <end position="173"/>
    </location>
</feature>
<feature type="domain" description="S1 motif 3" evidence="2">
    <location>
        <begin position="194"/>
        <end position="262"/>
    </location>
</feature>
<feature type="domain" description="S1 motif 4" evidence="2">
    <location>
        <begin position="279"/>
        <end position="348"/>
    </location>
</feature>
<feature type="region of interest" description="Disordered" evidence="3">
    <location>
        <begin position="356"/>
        <end position="381"/>
    </location>
</feature>
<comment type="function">
    <text evidence="1">Binds mRNA; thus facilitating recognition of the initiation point. It is needed to translate mRNA with a short Shine-Dalgarno (SD) purine-rich sequence (By similarity).</text>
</comment>
<comment type="similarity">
    <text evidence="4">Belongs to the bacterial ribosomal protein bS1 family.</text>
</comment>
<organism>
    <name type="scientific">Staphylococcus aureus (strain MRSA252)</name>
    <dbReference type="NCBI Taxonomy" id="282458"/>
    <lineage>
        <taxon>Bacteria</taxon>
        <taxon>Bacillati</taxon>
        <taxon>Bacillota</taxon>
        <taxon>Bacilli</taxon>
        <taxon>Bacillales</taxon>
        <taxon>Staphylococcaceae</taxon>
        <taxon>Staphylococcus</taxon>
    </lineage>
</organism>
<protein>
    <recommendedName>
        <fullName evidence="4">Small ribosomal subunit protein bS1</fullName>
    </recommendedName>
    <alternativeName>
        <fullName>30S ribosomal protein S1</fullName>
    </alternativeName>
</protein>
<sequence length="391" mass="43276">MTEEFNESMINDIKEGDKVTGEVQQVEDKQVVVHINGGKFNGIIPISQLSTHHIDSPSEVVKEGDEVEAYVTKVEFDEENETGAYILSRRQLETEKSYSYLQEKLDNNEIIEAKVTEVVKGGLVVDVGQRGFVPASLISTDFIEDFSVFDGQTIRIKVEELDPENNRVILSRKAVEQEENDAKKDQLLQSLNEGDVIDGKVARLTQFGAFIDIGGVDGLVHVSELSHEHVQTPEEVVSIGQDVKVKIKSIDRDTERISLSIKDTLPTPFENIKGQFHENDDIEGVVVRLANFGAFVEIAPGVQGLVHISEIAHKHIGTPGEVLEPGQQVNVKILGIDEENERVSLSIKATLPNEDVVESDPSTTKAYLESEEEDNPTIGDMIGDKLKNLKL</sequence>
<reference key="1">
    <citation type="journal article" date="2004" name="Proc. Natl. Acad. Sci. U.S.A.">
        <title>Complete genomes of two clinical Staphylococcus aureus strains: evidence for the rapid evolution of virulence and drug resistance.</title>
        <authorList>
            <person name="Holden M.T.G."/>
            <person name="Feil E.J."/>
            <person name="Lindsay J.A."/>
            <person name="Peacock S.J."/>
            <person name="Day N.P.J."/>
            <person name="Enright M.C."/>
            <person name="Foster T.J."/>
            <person name="Moore C.E."/>
            <person name="Hurst L."/>
            <person name="Atkin R."/>
            <person name="Barron A."/>
            <person name="Bason N."/>
            <person name="Bentley S.D."/>
            <person name="Chillingworth C."/>
            <person name="Chillingworth T."/>
            <person name="Churcher C."/>
            <person name="Clark L."/>
            <person name="Corton C."/>
            <person name="Cronin A."/>
            <person name="Doggett J."/>
            <person name="Dowd L."/>
            <person name="Feltwell T."/>
            <person name="Hance Z."/>
            <person name="Harris B."/>
            <person name="Hauser H."/>
            <person name="Holroyd S."/>
            <person name="Jagels K."/>
            <person name="James K.D."/>
            <person name="Lennard N."/>
            <person name="Line A."/>
            <person name="Mayes R."/>
            <person name="Moule S."/>
            <person name="Mungall K."/>
            <person name="Ormond D."/>
            <person name="Quail M.A."/>
            <person name="Rabbinowitsch E."/>
            <person name="Rutherford K.M."/>
            <person name="Sanders M."/>
            <person name="Sharp S."/>
            <person name="Simmonds M."/>
            <person name="Stevens K."/>
            <person name="Whitehead S."/>
            <person name="Barrell B.G."/>
            <person name="Spratt B.G."/>
            <person name="Parkhill J."/>
        </authorList>
    </citation>
    <scope>NUCLEOTIDE SEQUENCE [LARGE SCALE GENOMIC DNA]</scope>
    <source>
        <strain>MRSA252</strain>
    </source>
</reference>
<evidence type="ECO:0000250" key="1"/>
<evidence type="ECO:0000255" key="2">
    <source>
        <dbReference type="PROSITE-ProRule" id="PRU00180"/>
    </source>
</evidence>
<evidence type="ECO:0000256" key="3">
    <source>
        <dbReference type="SAM" id="MobiDB-lite"/>
    </source>
</evidence>
<evidence type="ECO:0000305" key="4"/>
<dbReference type="EMBL" id="BX571856">
    <property type="protein sequence ID" value="CAG40483.1"/>
    <property type="molecule type" value="Genomic_DNA"/>
</dbReference>
<dbReference type="RefSeq" id="WP_000133953.1">
    <property type="nucleotide sequence ID" value="NC_002952.2"/>
</dbReference>
<dbReference type="SMR" id="Q6GGT5"/>
<dbReference type="KEGG" id="sar:SAR1485"/>
<dbReference type="HOGENOM" id="CLU_015805_4_5_9"/>
<dbReference type="Proteomes" id="UP000000596">
    <property type="component" value="Chromosome"/>
</dbReference>
<dbReference type="GO" id="GO:0022627">
    <property type="term" value="C:cytosolic small ribosomal subunit"/>
    <property type="evidence" value="ECO:0007669"/>
    <property type="project" value="TreeGrafter"/>
</dbReference>
<dbReference type="GO" id="GO:0003729">
    <property type="term" value="F:mRNA binding"/>
    <property type="evidence" value="ECO:0007669"/>
    <property type="project" value="TreeGrafter"/>
</dbReference>
<dbReference type="GO" id="GO:0003735">
    <property type="term" value="F:structural constituent of ribosome"/>
    <property type="evidence" value="ECO:0007669"/>
    <property type="project" value="TreeGrafter"/>
</dbReference>
<dbReference type="GO" id="GO:0006412">
    <property type="term" value="P:translation"/>
    <property type="evidence" value="ECO:0007669"/>
    <property type="project" value="TreeGrafter"/>
</dbReference>
<dbReference type="CDD" id="cd05687">
    <property type="entry name" value="S1_RPS1_repeat_ec1_hs1"/>
    <property type="match status" value="1"/>
</dbReference>
<dbReference type="CDD" id="cd04465">
    <property type="entry name" value="S1_RPS1_repeat_ec2_hs2"/>
    <property type="match status" value="1"/>
</dbReference>
<dbReference type="CDD" id="cd05688">
    <property type="entry name" value="S1_RPS1_repeat_ec3"/>
    <property type="match status" value="1"/>
</dbReference>
<dbReference type="FunFam" id="2.40.50.140:FF:000114">
    <property type="entry name" value="30S ribosomal protein S1"/>
    <property type="match status" value="2"/>
</dbReference>
<dbReference type="FunFam" id="2.40.50.140:FF:000166">
    <property type="entry name" value="30S ribosomal protein S1"/>
    <property type="match status" value="1"/>
</dbReference>
<dbReference type="FunFam" id="2.40.50.140:FF:000182">
    <property type="entry name" value="30S ribosomal protein S1"/>
    <property type="match status" value="1"/>
</dbReference>
<dbReference type="Gene3D" id="2.40.50.140">
    <property type="entry name" value="Nucleic acid-binding proteins"/>
    <property type="match status" value="4"/>
</dbReference>
<dbReference type="InterPro" id="IPR012340">
    <property type="entry name" value="NA-bd_OB-fold"/>
</dbReference>
<dbReference type="InterPro" id="IPR050437">
    <property type="entry name" value="Ribos_protein_bS1-like"/>
</dbReference>
<dbReference type="InterPro" id="IPR035104">
    <property type="entry name" value="Ribosomal_protein_S1-like"/>
</dbReference>
<dbReference type="InterPro" id="IPR003029">
    <property type="entry name" value="S1_domain"/>
</dbReference>
<dbReference type="NCBIfam" id="NF005208">
    <property type="entry name" value="PRK06676.1"/>
    <property type="match status" value="1"/>
</dbReference>
<dbReference type="PANTHER" id="PTHR10724">
    <property type="entry name" value="30S RIBOSOMAL PROTEIN S1"/>
    <property type="match status" value="1"/>
</dbReference>
<dbReference type="PANTHER" id="PTHR10724:SF7">
    <property type="entry name" value="SMALL RIBOSOMAL SUBUNIT PROTEIN BS1C"/>
    <property type="match status" value="1"/>
</dbReference>
<dbReference type="Pfam" id="PF00575">
    <property type="entry name" value="S1"/>
    <property type="match status" value="4"/>
</dbReference>
<dbReference type="PRINTS" id="PR00681">
    <property type="entry name" value="RIBOSOMALS1"/>
</dbReference>
<dbReference type="SMART" id="SM00316">
    <property type="entry name" value="S1"/>
    <property type="match status" value="4"/>
</dbReference>
<dbReference type="SUPFAM" id="SSF50249">
    <property type="entry name" value="Nucleic acid-binding proteins"/>
    <property type="match status" value="4"/>
</dbReference>
<dbReference type="PROSITE" id="PS50126">
    <property type="entry name" value="S1"/>
    <property type="match status" value="4"/>
</dbReference>
<name>RS1_STAAR</name>